<accession>Q36428</accession>
<geneLocation type="mitochondrion"/>
<comment type="function">
    <text evidence="1">Core subunit of the mitochondrial membrane respiratory chain NADH dehydrogenase (Complex I) that is believed to belong to the minimal assembly required for catalysis. Complex I functions in the transfer of electrons from NADH to the respiratory chain. The immediate electron acceptor for the enzyme is believed to be ubiquinone (By similarity).</text>
</comment>
<comment type="catalytic activity">
    <reaction>
        <text>a ubiquinone + NADH + 5 H(+)(in) = a ubiquinol + NAD(+) + 4 H(+)(out)</text>
        <dbReference type="Rhea" id="RHEA:29091"/>
        <dbReference type="Rhea" id="RHEA-COMP:9565"/>
        <dbReference type="Rhea" id="RHEA-COMP:9566"/>
        <dbReference type="ChEBI" id="CHEBI:15378"/>
        <dbReference type="ChEBI" id="CHEBI:16389"/>
        <dbReference type="ChEBI" id="CHEBI:17976"/>
        <dbReference type="ChEBI" id="CHEBI:57540"/>
        <dbReference type="ChEBI" id="CHEBI:57945"/>
        <dbReference type="EC" id="7.1.1.2"/>
    </reaction>
</comment>
<comment type="subcellular location">
    <subcellularLocation>
        <location evidence="1">Mitochondrion inner membrane</location>
        <topology evidence="1">Multi-pass membrane protein</topology>
    </subcellularLocation>
</comment>
<comment type="similarity">
    <text evidence="3">Belongs to the complex I subunit 5 family.</text>
</comment>
<proteinExistence type="inferred from homology"/>
<protein>
    <recommendedName>
        <fullName>NADH-ubiquinone oxidoreductase chain 5</fullName>
        <ecNumber>7.1.1.2</ecNumber>
    </recommendedName>
    <alternativeName>
        <fullName>NADH dehydrogenase subunit 5</fullName>
    </alternativeName>
</protein>
<feature type="chain" id="PRO_0000118106" description="NADH-ubiquinone oxidoreductase chain 5">
    <location>
        <begin position="1"/>
        <end position="572"/>
    </location>
</feature>
<feature type="transmembrane region" description="Helical" evidence="2">
    <location>
        <begin position="6"/>
        <end position="26"/>
    </location>
</feature>
<feature type="transmembrane region" description="Helical" evidence="2">
    <location>
        <begin position="44"/>
        <end position="64"/>
    </location>
</feature>
<feature type="transmembrane region" description="Helical" evidence="2">
    <location>
        <begin position="86"/>
        <end position="106"/>
    </location>
</feature>
<feature type="transmembrane region" description="Helical" evidence="2">
    <location>
        <begin position="107"/>
        <end position="127"/>
    </location>
</feature>
<feature type="transmembrane region" description="Helical" evidence="2">
    <location>
        <begin position="147"/>
        <end position="167"/>
    </location>
</feature>
<feature type="transmembrane region" description="Helical" evidence="2">
    <location>
        <begin position="179"/>
        <end position="201"/>
    </location>
</feature>
<feature type="transmembrane region" description="Helical" evidence="2">
    <location>
        <begin position="208"/>
        <end position="230"/>
    </location>
</feature>
<feature type="transmembrane region" description="Helical" evidence="2">
    <location>
        <begin position="234"/>
        <end position="254"/>
    </location>
</feature>
<feature type="transmembrane region" description="Helical" evidence="2">
    <location>
        <begin position="268"/>
        <end position="288"/>
    </location>
</feature>
<feature type="transmembrane region" description="Helical" evidence="2">
    <location>
        <begin position="291"/>
        <end position="311"/>
    </location>
</feature>
<feature type="transmembrane region" description="Helical" evidence="2">
    <location>
        <begin position="337"/>
        <end position="357"/>
    </location>
</feature>
<feature type="transmembrane region" description="Helical" evidence="2">
    <location>
        <begin position="372"/>
        <end position="394"/>
    </location>
</feature>
<feature type="transmembrane region" description="Helical" evidence="2">
    <location>
        <begin position="422"/>
        <end position="442"/>
    </location>
</feature>
<feature type="transmembrane region" description="Helical" evidence="2">
    <location>
        <begin position="454"/>
        <end position="474"/>
    </location>
</feature>
<feature type="transmembrane region" description="Helical" evidence="2">
    <location>
        <begin position="479"/>
        <end position="499"/>
    </location>
</feature>
<feature type="transmembrane region" description="Helical" evidence="2">
    <location>
        <begin position="524"/>
        <end position="544"/>
    </location>
</feature>
<feature type="transmembrane region" description="Helical" evidence="2">
    <location>
        <begin position="552"/>
        <end position="572"/>
    </location>
</feature>
<gene>
    <name type="primary">ND5</name>
</gene>
<name>NU5M_LOCMI</name>
<organism>
    <name type="scientific">Locusta migratoria</name>
    <name type="common">Migratory locust</name>
    <dbReference type="NCBI Taxonomy" id="7004"/>
    <lineage>
        <taxon>Eukaryota</taxon>
        <taxon>Metazoa</taxon>
        <taxon>Ecdysozoa</taxon>
        <taxon>Arthropoda</taxon>
        <taxon>Hexapoda</taxon>
        <taxon>Insecta</taxon>
        <taxon>Pterygota</taxon>
        <taxon>Neoptera</taxon>
        <taxon>Polyneoptera</taxon>
        <taxon>Orthoptera</taxon>
        <taxon>Caelifera</taxon>
        <taxon>Acrididea</taxon>
        <taxon>Acridomorpha</taxon>
        <taxon>Acridoidea</taxon>
        <taxon>Acrididae</taxon>
        <taxon>Oedipodinae</taxon>
        <taxon>Locusta</taxon>
    </lineage>
</organism>
<dbReference type="EC" id="7.1.1.2"/>
<dbReference type="EMBL" id="X80245">
    <property type="protein sequence ID" value="CAA56538.1"/>
    <property type="molecule type" value="Genomic_DNA"/>
</dbReference>
<dbReference type="PIR" id="T11478">
    <property type="entry name" value="T11478"/>
</dbReference>
<dbReference type="RefSeq" id="NP_007297.1">
    <property type="nucleotide sequence ID" value="NC_001712.1"/>
</dbReference>
<dbReference type="SMR" id="Q36428"/>
<dbReference type="GeneID" id="807957"/>
<dbReference type="CTD" id="4540"/>
<dbReference type="GO" id="GO:0005743">
    <property type="term" value="C:mitochondrial inner membrane"/>
    <property type="evidence" value="ECO:0007669"/>
    <property type="project" value="UniProtKB-SubCell"/>
</dbReference>
<dbReference type="GO" id="GO:0008137">
    <property type="term" value="F:NADH dehydrogenase (ubiquinone) activity"/>
    <property type="evidence" value="ECO:0007669"/>
    <property type="project" value="UniProtKB-EC"/>
</dbReference>
<dbReference type="GO" id="GO:0042773">
    <property type="term" value="P:ATP synthesis coupled electron transport"/>
    <property type="evidence" value="ECO:0007669"/>
    <property type="project" value="InterPro"/>
</dbReference>
<dbReference type="GO" id="GO:0015990">
    <property type="term" value="P:electron transport coupled proton transport"/>
    <property type="evidence" value="ECO:0007669"/>
    <property type="project" value="TreeGrafter"/>
</dbReference>
<dbReference type="InterPro" id="IPR010934">
    <property type="entry name" value="NADH_DH_su5_C"/>
</dbReference>
<dbReference type="InterPro" id="IPR001750">
    <property type="entry name" value="ND/Mrp_TM"/>
</dbReference>
<dbReference type="InterPro" id="IPR003945">
    <property type="entry name" value="NU5C-like"/>
</dbReference>
<dbReference type="InterPro" id="IPR001516">
    <property type="entry name" value="Proton_antipo_N"/>
</dbReference>
<dbReference type="PANTHER" id="PTHR42829">
    <property type="entry name" value="NADH-UBIQUINONE OXIDOREDUCTASE CHAIN 5"/>
    <property type="match status" value="1"/>
</dbReference>
<dbReference type="PANTHER" id="PTHR42829:SF2">
    <property type="entry name" value="NADH-UBIQUINONE OXIDOREDUCTASE CHAIN 5"/>
    <property type="match status" value="1"/>
</dbReference>
<dbReference type="Pfam" id="PF06455">
    <property type="entry name" value="NADH5_C"/>
    <property type="match status" value="1"/>
</dbReference>
<dbReference type="Pfam" id="PF00361">
    <property type="entry name" value="Proton_antipo_M"/>
    <property type="match status" value="1"/>
</dbReference>
<dbReference type="Pfam" id="PF00662">
    <property type="entry name" value="Proton_antipo_N"/>
    <property type="match status" value="1"/>
</dbReference>
<dbReference type="PRINTS" id="PR01434">
    <property type="entry name" value="NADHDHGNASE5"/>
</dbReference>
<keyword id="KW-0249">Electron transport</keyword>
<keyword id="KW-0472">Membrane</keyword>
<keyword id="KW-0496">Mitochondrion</keyword>
<keyword id="KW-0999">Mitochondrion inner membrane</keyword>
<keyword id="KW-0520">NAD</keyword>
<keyword id="KW-0679">Respiratory chain</keyword>
<keyword id="KW-1278">Translocase</keyword>
<keyword id="KW-0812">Transmembrane</keyword>
<keyword id="KW-1133">Transmembrane helix</keyword>
<keyword id="KW-0813">Transport</keyword>
<keyword id="KW-0830">Ubiquinone</keyword>
<sequence length="572" mass="66045">MCSLSFFFLFLFSTLFFILGIYYLMIDYSLFIEWELFSLNSSMVVMTFIIDWMSLVFMSFVMYISSLVIYYSNDYMHNEKNINRFIMIVLMFILSMAFLIISPNLISILLGWDGLGLVSYCLVIYYQNVKSYNAGMLTALSNRIGDVAILISISWMLNFGSWNYIYYYYFISDSFEMKIITLLIILAAMTKSAQIPFSSWLPAAMAAPTPVSALVHSSTLVTAGVYLLIRFNPMLMVYDFGWYILFIGCLTMFMSGLGANFEFDLKKIIALSTLSQLGLMMSILSMGYSDLAFFHLLTHALFKALLFMCAGSMIHNLRDSQDIRFMGSIIHFMPLTSICFNVSSLCLCGMPFLAGFYSKDLILEIVCLSWVNFFIFFLYFFSTGLTASYSFRLFYYSMSGDNNYYSSYSFNDSSYFISFGMIGLLIVAVFGGSLLSWLIFPVPYLVVLPWYLKFLTLLTIILGSYFGYVISDFVYSYELFSLNFLSFVMFTGSMWFMPFLSTNYVSYLPLSFGYYSLKSFDSGWGELLGGQGLYSFFVYLINYIQSLYDSNFKVYLLTFVFWMFILFVLFFL</sequence>
<reference key="1">
    <citation type="journal article" date="1995" name="J. Mol. Evol.">
        <title>The sequence, organization, and evolution of the Locusta migratoria mitochondrial genome.</title>
        <authorList>
            <person name="Flook P.K."/>
            <person name="Rowell C.H.F."/>
            <person name="Gellissen G."/>
        </authorList>
    </citation>
    <scope>NUCLEOTIDE SEQUENCE [GENOMIC DNA]</scope>
</reference>
<evidence type="ECO:0000250" key="1"/>
<evidence type="ECO:0000255" key="2"/>
<evidence type="ECO:0000305" key="3"/>